<organism>
    <name type="scientific">Xenopus laevis</name>
    <name type="common">African clawed frog</name>
    <dbReference type="NCBI Taxonomy" id="8355"/>
    <lineage>
        <taxon>Eukaryota</taxon>
        <taxon>Metazoa</taxon>
        <taxon>Chordata</taxon>
        <taxon>Craniata</taxon>
        <taxon>Vertebrata</taxon>
        <taxon>Euteleostomi</taxon>
        <taxon>Amphibia</taxon>
        <taxon>Batrachia</taxon>
        <taxon>Anura</taxon>
        <taxon>Pipoidea</taxon>
        <taxon>Pipidae</taxon>
        <taxon>Xenopodinae</taxon>
        <taxon>Xenopus</taxon>
        <taxon>Xenopus</taxon>
    </lineage>
</organism>
<protein>
    <recommendedName>
        <fullName>Protein transport protein Sec61 subunit gamma</fullName>
    </recommendedName>
</protein>
<gene>
    <name type="primary">sec61g</name>
</gene>
<dbReference type="EMBL" id="BC078558">
    <property type="protein sequence ID" value="AAH78558.1"/>
    <property type="molecule type" value="mRNA"/>
</dbReference>
<dbReference type="RefSeq" id="NP_001165129.1">
    <property type="nucleotide sequence ID" value="NM_001171658.2"/>
</dbReference>
<dbReference type="SMR" id="Q66KU2"/>
<dbReference type="DNASU" id="394424"/>
<dbReference type="GeneID" id="394424"/>
<dbReference type="KEGG" id="xla:100329133"/>
<dbReference type="KEGG" id="xla:394424"/>
<dbReference type="CTD" id="100329133"/>
<dbReference type="CTD" id="394424"/>
<dbReference type="OMA" id="VAYACTI"/>
<dbReference type="OrthoDB" id="2401875at2759"/>
<dbReference type="Proteomes" id="UP000186698">
    <property type="component" value="Chromosome 6L"/>
</dbReference>
<dbReference type="Proteomes" id="UP000186698">
    <property type="component" value="Chromosome 6S"/>
</dbReference>
<dbReference type="Bgee" id="100329133">
    <property type="expression patterns" value="Expressed in gastrula and 15 other cell types or tissues"/>
</dbReference>
<dbReference type="GO" id="GO:0071261">
    <property type="term" value="C:Ssh1 translocon complex"/>
    <property type="evidence" value="ECO:0000318"/>
    <property type="project" value="GO_Central"/>
</dbReference>
<dbReference type="GO" id="GO:0008320">
    <property type="term" value="F:protein transmembrane transporter activity"/>
    <property type="evidence" value="ECO:0000250"/>
    <property type="project" value="UniProtKB"/>
</dbReference>
<dbReference type="GO" id="GO:0043022">
    <property type="term" value="F:ribosome binding"/>
    <property type="evidence" value="ECO:0000250"/>
    <property type="project" value="UniProtKB"/>
</dbReference>
<dbReference type="GO" id="GO:0031204">
    <property type="term" value="P:post-translational protein targeting to membrane, translocation"/>
    <property type="evidence" value="ECO:0000318"/>
    <property type="project" value="GO_Central"/>
</dbReference>
<dbReference type="GO" id="GO:0045047">
    <property type="term" value="P:protein targeting to ER"/>
    <property type="evidence" value="ECO:0000250"/>
    <property type="project" value="UniProtKB"/>
</dbReference>
<dbReference type="FunFam" id="1.20.5.820:FF:000001">
    <property type="entry name" value="Transport protein Sec61 subunit gamma"/>
    <property type="match status" value="1"/>
</dbReference>
<dbReference type="Gene3D" id="1.20.5.820">
    <property type="entry name" value="Preprotein translocase SecE subunit"/>
    <property type="match status" value="1"/>
</dbReference>
<dbReference type="HAMAP" id="MF_00422">
    <property type="entry name" value="SecE"/>
    <property type="match status" value="1"/>
</dbReference>
<dbReference type="InterPro" id="IPR023391">
    <property type="entry name" value="Prot_translocase_SecE_dom_sf"/>
</dbReference>
<dbReference type="InterPro" id="IPR008158">
    <property type="entry name" value="Translocase_Sec61-g"/>
</dbReference>
<dbReference type="InterPro" id="IPR001901">
    <property type="entry name" value="Translocase_SecE/Sec61-g"/>
</dbReference>
<dbReference type="NCBIfam" id="TIGR00327">
    <property type="entry name" value="secE_euk_arch"/>
    <property type="match status" value="1"/>
</dbReference>
<dbReference type="PANTHER" id="PTHR12309">
    <property type="entry name" value="SEC61 GAMMA SUBUNIT"/>
    <property type="match status" value="1"/>
</dbReference>
<dbReference type="Pfam" id="PF00584">
    <property type="entry name" value="SecE"/>
    <property type="match status" value="1"/>
</dbReference>
<dbReference type="SUPFAM" id="SSF103456">
    <property type="entry name" value="Preprotein translocase SecE subunit"/>
    <property type="match status" value="1"/>
</dbReference>
<dbReference type="PROSITE" id="PS01067">
    <property type="entry name" value="SECE_SEC61G"/>
    <property type="match status" value="1"/>
</dbReference>
<sequence length="68" mass="7771">MDQVMQFVEPSRQFVKDSIRLVKRCTKPDRKEFQKIAMATAIGFAIMGFIGFFVKLIHIPINNIIVGS</sequence>
<keyword id="KW-0256">Endoplasmic reticulum</keyword>
<keyword id="KW-0472">Membrane</keyword>
<keyword id="KW-0653">Protein transport</keyword>
<keyword id="KW-1185">Reference proteome</keyword>
<keyword id="KW-0811">Translocation</keyword>
<keyword id="KW-0812">Transmembrane</keyword>
<keyword id="KW-1133">Transmembrane helix</keyword>
<keyword id="KW-0813">Transport</keyword>
<comment type="function">
    <text evidence="1 2">Component of SEC61 channel-forming translocon complex that mediates transport of signal peptide-containing precursor polypeptides across the endoplasmic reticulum (ER). Forms a ribosome receptor and a gated pore in the ER membrane, both functions required for cotranslational translocation of nascent polypeptides (By similarity). The SEC61 channel is also involved in ER membrane insertion of transmembrane proteins: it mediates membrane insertion of the first few transmembrane segments of proteins, while insertion of subsequent transmembrane regions of multi-pass membrane proteins is mediated by the multi-pass translocon (MPT) complex (By similarity).</text>
</comment>
<comment type="subunit">
    <text evidence="1 2">The SEC61 channel-forming translocon complex consists of channel-forming core components SEC61A1, SEC61B and SEC61G and different auxiliary components such as SEC62 and SEC63 (By similarity). The SEC61 channel associates with the multi-pass translocon (MPT) complex (By similarity).</text>
</comment>
<comment type="subcellular location">
    <subcellularLocation>
        <location evidence="1">Endoplasmic reticulum membrane</location>
        <topology evidence="4">Single-pass membrane protein</topology>
    </subcellularLocation>
</comment>
<comment type="similarity">
    <text evidence="4">Belongs to the SecE/SEC61-gamma family.</text>
</comment>
<reference key="1">
    <citation type="submission" date="2004-07" db="EMBL/GenBank/DDBJ databases">
        <authorList>
            <consortium name="NIH - Xenopus Gene Collection (XGC) project"/>
        </authorList>
    </citation>
    <scope>NUCLEOTIDE SEQUENCE [LARGE SCALE MRNA]</scope>
</reference>
<name>SC61G_XENLA</name>
<proteinExistence type="inferred from homology"/>
<evidence type="ECO:0000250" key="1">
    <source>
        <dbReference type="UniProtKB" id="P60058"/>
    </source>
</evidence>
<evidence type="ECO:0000250" key="2">
    <source>
        <dbReference type="UniProtKB" id="P60059"/>
    </source>
</evidence>
<evidence type="ECO:0000255" key="3"/>
<evidence type="ECO:0000305" key="4"/>
<accession>Q66KU2</accession>
<feature type="chain" id="PRO_0000300688" description="Protein transport protein Sec61 subunit gamma">
    <location>
        <begin position="1"/>
        <end position="68"/>
    </location>
</feature>
<feature type="topological domain" description="Cytoplasmic" evidence="3">
    <location>
        <begin position="1"/>
        <end position="32"/>
    </location>
</feature>
<feature type="transmembrane region" description="Helical" evidence="3">
    <location>
        <begin position="33"/>
        <end position="61"/>
    </location>
</feature>
<feature type="topological domain" description="Extracellular" evidence="3">
    <location>
        <begin position="62"/>
        <end position="68"/>
    </location>
</feature>